<keyword id="KW-1185">Reference proteome</keyword>
<feature type="chain" id="PRO_0000214656" description="UPF0231 protein YacL">
    <location>
        <begin position="1"/>
        <end position="120"/>
    </location>
</feature>
<dbReference type="EMBL" id="AE006468">
    <property type="protein sequence ID" value="AAL19124.1"/>
    <property type="molecule type" value="Genomic_DNA"/>
</dbReference>
<dbReference type="RefSeq" id="NP_459165.1">
    <property type="nucleotide sequence ID" value="NC_003197.2"/>
</dbReference>
<dbReference type="RefSeq" id="WP_000384308.1">
    <property type="nucleotide sequence ID" value="NC_003197.2"/>
</dbReference>
<dbReference type="SMR" id="Q8ZRS6"/>
<dbReference type="STRING" id="99287.STM0160"/>
<dbReference type="PaxDb" id="99287-STM0160"/>
<dbReference type="DNASU" id="1251678"/>
<dbReference type="GeneID" id="1251678"/>
<dbReference type="KEGG" id="stm:STM0160"/>
<dbReference type="PATRIC" id="fig|99287.12.peg.170"/>
<dbReference type="HOGENOM" id="CLU_139226_0_0_6"/>
<dbReference type="OMA" id="FSMDHEA"/>
<dbReference type="PhylomeDB" id="Q8ZRS6"/>
<dbReference type="BioCyc" id="SENT99287:STM0160-MONOMER"/>
<dbReference type="Proteomes" id="UP000001014">
    <property type="component" value="Chromosome"/>
</dbReference>
<dbReference type="HAMAP" id="MF_01053">
    <property type="entry name" value="UPF0231"/>
    <property type="match status" value="1"/>
</dbReference>
<dbReference type="InterPro" id="IPR008249">
    <property type="entry name" value="UPF0231"/>
</dbReference>
<dbReference type="NCBIfam" id="NF003574">
    <property type="entry name" value="PRK05248.1-1"/>
    <property type="match status" value="1"/>
</dbReference>
<dbReference type="NCBIfam" id="NF003576">
    <property type="entry name" value="PRK05248.1-3"/>
    <property type="match status" value="1"/>
</dbReference>
<dbReference type="Pfam" id="PF06062">
    <property type="entry name" value="UPF0231"/>
    <property type="match status" value="1"/>
</dbReference>
<dbReference type="PIRSF" id="PIRSF006287">
    <property type="entry name" value="UCP006287"/>
    <property type="match status" value="1"/>
</dbReference>
<accession>Q8ZRS6</accession>
<protein>
    <recommendedName>
        <fullName evidence="1">UPF0231 protein YacL</fullName>
    </recommendedName>
</protein>
<comment type="similarity">
    <text evidence="1">Belongs to the UPF0231 family.</text>
</comment>
<reference key="1">
    <citation type="journal article" date="2001" name="Nature">
        <title>Complete genome sequence of Salmonella enterica serovar Typhimurium LT2.</title>
        <authorList>
            <person name="McClelland M."/>
            <person name="Sanderson K.E."/>
            <person name="Spieth J."/>
            <person name="Clifton S.W."/>
            <person name="Latreille P."/>
            <person name="Courtney L."/>
            <person name="Porwollik S."/>
            <person name="Ali J."/>
            <person name="Dante M."/>
            <person name="Du F."/>
            <person name="Hou S."/>
            <person name="Layman D."/>
            <person name="Leonard S."/>
            <person name="Nguyen C."/>
            <person name="Scott K."/>
            <person name="Holmes A."/>
            <person name="Grewal N."/>
            <person name="Mulvaney E."/>
            <person name="Ryan E."/>
            <person name="Sun H."/>
            <person name="Florea L."/>
            <person name="Miller W."/>
            <person name="Stoneking T."/>
            <person name="Nhan M."/>
            <person name="Waterston R."/>
            <person name="Wilson R.K."/>
        </authorList>
    </citation>
    <scope>NUCLEOTIDE SEQUENCE [LARGE SCALE GENOMIC DNA]</scope>
    <source>
        <strain>LT2 / SGSC1412 / ATCC 700720</strain>
    </source>
</reference>
<organism>
    <name type="scientific">Salmonella typhimurium (strain LT2 / SGSC1412 / ATCC 700720)</name>
    <dbReference type="NCBI Taxonomy" id="99287"/>
    <lineage>
        <taxon>Bacteria</taxon>
        <taxon>Pseudomonadati</taxon>
        <taxon>Pseudomonadota</taxon>
        <taxon>Gammaproteobacteria</taxon>
        <taxon>Enterobacterales</taxon>
        <taxon>Enterobacteriaceae</taxon>
        <taxon>Salmonella</taxon>
    </lineage>
</organism>
<sequence>MDYEFLRDVTGGVKVRMSMGHEVVGHWFNEEVKDNLSLLDEVEQAARTVKGSERSWQRAGHEYTIWMDGEEVMIRANQLDFSGDEMEEGMSYYDEESLSLCGMEDFLRVVAAYREFVSKA</sequence>
<proteinExistence type="inferred from homology"/>
<name>YACL_SALTY</name>
<evidence type="ECO:0000255" key="1">
    <source>
        <dbReference type="HAMAP-Rule" id="MF_01053"/>
    </source>
</evidence>
<gene>
    <name evidence="1" type="primary">yacL</name>
    <name type="ordered locus">STM0160</name>
</gene>